<reference key="1">
    <citation type="journal article" date="2006" name="Lancet">
        <title>Complete genome sequence of USA300, an epidemic clone of community-acquired meticillin-resistant Staphylococcus aureus.</title>
        <authorList>
            <person name="Diep B.A."/>
            <person name="Gill S.R."/>
            <person name="Chang R.F."/>
            <person name="Phan T.H."/>
            <person name="Chen J.H."/>
            <person name="Davidson M.G."/>
            <person name="Lin F."/>
            <person name="Lin J."/>
            <person name="Carleton H.A."/>
            <person name="Mongodin E.F."/>
            <person name="Sensabaugh G.F."/>
            <person name="Perdreau-Remington F."/>
        </authorList>
    </citation>
    <scope>NUCLEOTIDE SEQUENCE [LARGE SCALE GENOMIC DNA]</scope>
    <source>
        <strain>USA300</strain>
    </source>
</reference>
<proteinExistence type="inferred from homology"/>
<name>KITH_STAA3</name>
<gene>
    <name evidence="1" type="primary">tdk</name>
    <name type="ordered locus">SAUSA300_2073</name>
</gene>
<comment type="catalytic activity">
    <reaction evidence="1">
        <text>thymidine + ATP = dTMP + ADP + H(+)</text>
        <dbReference type="Rhea" id="RHEA:19129"/>
        <dbReference type="ChEBI" id="CHEBI:15378"/>
        <dbReference type="ChEBI" id="CHEBI:17748"/>
        <dbReference type="ChEBI" id="CHEBI:30616"/>
        <dbReference type="ChEBI" id="CHEBI:63528"/>
        <dbReference type="ChEBI" id="CHEBI:456216"/>
        <dbReference type="EC" id="2.7.1.21"/>
    </reaction>
</comment>
<comment type="subunit">
    <text evidence="1">Homotetramer.</text>
</comment>
<comment type="subcellular location">
    <subcellularLocation>
        <location evidence="1">Cytoplasm</location>
    </subcellularLocation>
</comment>
<comment type="similarity">
    <text evidence="1">Belongs to the thymidine kinase family.</text>
</comment>
<evidence type="ECO:0000255" key="1">
    <source>
        <dbReference type="HAMAP-Rule" id="MF_00124"/>
    </source>
</evidence>
<dbReference type="EC" id="2.7.1.21" evidence="1"/>
<dbReference type="EMBL" id="CP000255">
    <property type="protein sequence ID" value="ABD21139.1"/>
    <property type="molecule type" value="Genomic_DNA"/>
</dbReference>
<dbReference type="RefSeq" id="WP_000273356.1">
    <property type="nucleotide sequence ID" value="NZ_CP027476.1"/>
</dbReference>
<dbReference type="SMR" id="Q2FF09"/>
<dbReference type="KEGG" id="saa:SAUSA300_2073"/>
<dbReference type="HOGENOM" id="CLU_064400_3_0_9"/>
<dbReference type="OMA" id="EAYEPRC"/>
<dbReference type="Proteomes" id="UP000001939">
    <property type="component" value="Chromosome"/>
</dbReference>
<dbReference type="GO" id="GO:0005829">
    <property type="term" value="C:cytosol"/>
    <property type="evidence" value="ECO:0007669"/>
    <property type="project" value="TreeGrafter"/>
</dbReference>
<dbReference type="GO" id="GO:0005524">
    <property type="term" value="F:ATP binding"/>
    <property type="evidence" value="ECO:0007669"/>
    <property type="project" value="UniProtKB-UniRule"/>
</dbReference>
<dbReference type="GO" id="GO:0004797">
    <property type="term" value="F:thymidine kinase activity"/>
    <property type="evidence" value="ECO:0007669"/>
    <property type="project" value="UniProtKB-UniRule"/>
</dbReference>
<dbReference type="GO" id="GO:0008270">
    <property type="term" value="F:zinc ion binding"/>
    <property type="evidence" value="ECO:0007669"/>
    <property type="project" value="UniProtKB-UniRule"/>
</dbReference>
<dbReference type="GO" id="GO:0071897">
    <property type="term" value="P:DNA biosynthetic process"/>
    <property type="evidence" value="ECO:0007669"/>
    <property type="project" value="UniProtKB-KW"/>
</dbReference>
<dbReference type="GO" id="GO:0046104">
    <property type="term" value="P:thymidine metabolic process"/>
    <property type="evidence" value="ECO:0007669"/>
    <property type="project" value="TreeGrafter"/>
</dbReference>
<dbReference type="FunFam" id="3.30.60.20:FF:000026">
    <property type="entry name" value="Thymidine kinase"/>
    <property type="match status" value="1"/>
</dbReference>
<dbReference type="FunFam" id="3.40.50.300:FF:000384">
    <property type="entry name" value="Thymidine kinase"/>
    <property type="match status" value="1"/>
</dbReference>
<dbReference type="Gene3D" id="3.30.60.20">
    <property type="match status" value="1"/>
</dbReference>
<dbReference type="Gene3D" id="3.40.50.300">
    <property type="entry name" value="P-loop containing nucleotide triphosphate hydrolases"/>
    <property type="match status" value="1"/>
</dbReference>
<dbReference type="HAMAP" id="MF_00124">
    <property type="entry name" value="Thymidine_kinase"/>
    <property type="match status" value="1"/>
</dbReference>
<dbReference type="InterPro" id="IPR027417">
    <property type="entry name" value="P-loop_NTPase"/>
</dbReference>
<dbReference type="InterPro" id="IPR001267">
    <property type="entry name" value="Thymidine_kinase"/>
</dbReference>
<dbReference type="InterPro" id="IPR020633">
    <property type="entry name" value="Thymidine_kinase_CS"/>
</dbReference>
<dbReference type="NCBIfam" id="NF003296">
    <property type="entry name" value="PRK04296.1-1"/>
    <property type="match status" value="1"/>
</dbReference>
<dbReference type="PANTHER" id="PTHR11441">
    <property type="entry name" value="THYMIDINE KINASE"/>
    <property type="match status" value="1"/>
</dbReference>
<dbReference type="PANTHER" id="PTHR11441:SF0">
    <property type="entry name" value="THYMIDINE KINASE, CYTOSOLIC"/>
    <property type="match status" value="1"/>
</dbReference>
<dbReference type="Pfam" id="PF00265">
    <property type="entry name" value="TK"/>
    <property type="match status" value="1"/>
</dbReference>
<dbReference type="PIRSF" id="PIRSF035805">
    <property type="entry name" value="TK_cell"/>
    <property type="match status" value="1"/>
</dbReference>
<dbReference type="SUPFAM" id="SSF57716">
    <property type="entry name" value="Glucocorticoid receptor-like (DNA-binding domain)"/>
    <property type="match status" value="1"/>
</dbReference>
<dbReference type="SUPFAM" id="SSF52540">
    <property type="entry name" value="P-loop containing nucleoside triphosphate hydrolases"/>
    <property type="match status" value="1"/>
</dbReference>
<dbReference type="PROSITE" id="PS00603">
    <property type="entry name" value="TK_CELLULAR_TYPE"/>
    <property type="match status" value="1"/>
</dbReference>
<feature type="chain" id="PRO_0000242807" description="Thymidine kinase">
    <location>
        <begin position="1"/>
        <end position="199"/>
    </location>
</feature>
<feature type="active site" description="Proton acceptor" evidence="1">
    <location>
        <position position="89"/>
    </location>
</feature>
<feature type="binding site" evidence="1">
    <location>
        <begin position="15"/>
        <end position="22"/>
    </location>
    <ligand>
        <name>ATP</name>
        <dbReference type="ChEBI" id="CHEBI:30616"/>
    </ligand>
</feature>
<feature type="binding site" evidence="1">
    <location>
        <begin position="88"/>
        <end position="91"/>
    </location>
    <ligand>
        <name>ATP</name>
        <dbReference type="ChEBI" id="CHEBI:30616"/>
    </ligand>
</feature>
<feature type="binding site" evidence="1">
    <location>
        <position position="145"/>
    </location>
    <ligand>
        <name>Zn(2+)</name>
        <dbReference type="ChEBI" id="CHEBI:29105"/>
    </ligand>
</feature>
<feature type="binding site" evidence="1">
    <location>
        <position position="148"/>
    </location>
    <ligand>
        <name>Zn(2+)</name>
        <dbReference type="ChEBI" id="CHEBI:29105"/>
    </ligand>
</feature>
<feature type="binding site" evidence="1">
    <location>
        <position position="183"/>
    </location>
    <ligand>
        <name>Zn(2+)</name>
        <dbReference type="ChEBI" id="CHEBI:29105"/>
    </ligand>
</feature>
<feature type="binding site" evidence="1">
    <location>
        <position position="186"/>
    </location>
    <ligand>
        <name>Zn(2+)</name>
        <dbReference type="ChEBI" id="CHEBI:29105"/>
    </ligand>
</feature>
<organism>
    <name type="scientific">Staphylococcus aureus (strain USA300)</name>
    <dbReference type="NCBI Taxonomy" id="367830"/>
    <lineage>
        <taxon>Bacteria</taxon>
        <taxon>Bacillati</taxon>
        <taxon>Bacillota</taxon>
        <taxon>Bacilli</taxon>
        <taxon>Bacillales</taxon>
        <taxon>Staphylococcaceae</taxon>
        <taxon>Staphylococcus</taxon>
    </lineage>
</organism>
<keyword id="KW-0067">ATP-binding</keyword>
<keyword id="KW-0963">Cytoplasm</keyword>
<keyword id="KW-0237">DNA synthesis</keyword>
<keyword id="KW-0418">Kinase</keyword>
<keyword id="KW-0479">Metal-binding</keyword>
<keyword id="KW-0547">Nucleotide-binding</keyword>
<keyword id="KW-0808">Transferase</keyword>
<keyword id="KW-0862">Zinc</keyword>
<accession>Q2FF09</accession>
<protein>
    <recommendedName>
        <fullName evidence="1">Thymidine kinase</fullName>
        <ecNumber evidence="1">2.7.1.21</ecNumber>
    </recommendedName>
</protein>
<sequence length="199" mass="22214">MYETYHSGWIECITGSMFSGKSEELIRRLRRGIYAKQKVVVFKPAIDDRYHKEKVVSHNGNAIEAINISKASEIMTHDLTNVDVIGIDEVQFFDDEIVSIVEKLSADGHRVIVAGLDMDFRGEPFEPMPKLMAVSEQVTKLQAVCAVCGSSSSRTQRLINGKPAKIDDPIILVGANESYEPRCRAHHIVAPSDNNKEEL</sequence>